<organism>
    <name type="scientific">Legionella pneumophila (strain Paris)</name>
    <dbReference type="NCBI Taxonomy" id="297246"/>
    <lineage>
        <taxon>Bacteria</taxon>
        <taxon>Pseudomonadati</taxon>
        <taxon>Pseudomonadota</taxon>
        <taxon>Gammaproteobacteria</taxon>
        <taxon>Legionellales</taxon>
        <taxon>Legionellaceae</taxon>
        <taxon>Legionella</taxon>
    </lineage>
</organism>
<evidence type="ECO:0000255" key="1">
    <source>
        <dbReference type="HAMAP-Rule" id="MF_01322"/>
    </source>
</evidence>
<comment type="function">
    <text evidence="1">DNA-dependent RNA polymerase catalyzes the transcription of DNA into RNA using the four ribonucleoside triphosphates as substrates.</text>
</comment>
<comment type="catalytic activity">
    <reaction evidence="1">
        <text>RNA(n) + a ribonucleoside 5'-triphosphate = RNA(n+1) + diphosphate</text>
        <dbReference type="Rhea" id="RHEA:21248"/>
        <dbReference type="Rhea" id="RHEA-COMP:14527"/>
        <dbReference type="Rhea" id="RHEA-COMP:17342"/>
        <dbReference type="ChEBI" id="CHEBI:33019"/>
        <dbReference type="ChEBI" id="CHEBI:61557"/>
        <dbReference type="ChEBI" id="CHEBI:140395"/>
        <dbReference type="EC" id="2.7.7.6"/>
    </reaction>
</comment>
<comment type="cofactor">
    <cofactor evidence="1">
        <name>Mg(2+)</name>
        <dbReference type="ChEBI" id="CHEBI:18420"/>
    </cofactor>
    <text evidence="1">Binds 1 Mg(2+) ion per subunit.</text>
</comment>
<comment type="cofactor">
    <cofactor evidence="1">
        <name>Zn(2+)</name>
        <dbReference type="ChEBI" id="CHEBI:29105"/>
    </cofactor>
    <text evidence="1">Binds 2 Zn(2+) ions per subunit.</text>
</comment>
<comment type="subunit">
    <text evidence="1">The RNAP catalytic core consists of 2 alpha, 1 beta, 1 beta' and 1 omega subunit. When a sigma factor is associated with the core the holoenzyme is formed, which can initiate transcription.</text>
</comment>
<comment type="similarity">
    <text evidence="1">Belongs to the RNA polymerase beta' chain family.</text>
</comment>
<protein>
    <recommendedName>
        <fullName evidence="1">DNA-directed RNA polymerase subunit beta'</fullName>
        <shortName evidence="1">RNAP subunit beta'</shortName>
        <ecNumber evidence="1">2.7.7.6</ecNumber>
    </recommendedName>
    <alternativeName>
        <fullName evidence="1">RNA polymerase subunit beta'</fullName>
    </alternativeName>
    <alternativeName>
        <fullName evidence="1">Transcriptase subunit beta'</fullName>
    </alternativeName>
</protein>
<reference key="1">
    <citation type="journal article" date="2004" name="Nat. Genet.">
        <title>Evidence in the Legionella pneumophila genome for exploitation of host cell functions and high genome plasticity.</title>
        <authorList>
            <person name="Cazalet C."/>
            <person name="Rusniok C."/>
            <person name="Brueggemann H."/>
            <person name="Zidane N."/>
            <person name="Magnier A."/>
            <person name="Ma L."/>
            <person name="Tichit M."/>
            <person name="Jarraud S."/>
            <person name="Bouchier C."/>
            <person name="Vandenesch F."/>
            <person name="Kunst F."/>
            <person name="Etienne J."/>
            <person name="Glaser P."/>
            <person name="Buchrieser C."/>
        </authorList>
    </citation>
    <scope>NUCLEOTIDE SEQUENCE [LARGE SCALE GENOMIC DNA]</scope>
    <source>
        <strain>Paris</strain>
    </source>
</reference>
<feature type="chain" id="PRO_0000225546" description="DNA-directed RNA polymerase subunit beta'">
    <location>
        <begin position="1"/>
        <end position="1401"/>
    </location>
</feature>
<feature type="binding site" evidence="1">
    <location>
        <position position="70"/>
    </location>
    <ligand>
        <name>Zn(2+)</name>
        <dbReference type="ChEBI" id="CHEBI:29105"/>
        <label>1</label>
    </ligand>
</feature>
<feature type="binding site" evidence="1">
    <location>
        <position position="72"/>
    </location>
    <ligand>
        <name>Zn(2+)</name>
        <dbReference type="ChEBI" id="CHEBI:29105"/>
        <label>1</label>
    </ligand>
</feature>
<feature type="binding site" evidence="1">
    <location>
        <position position="85"/>
    </location>
    <ligand>
        <name>Zn(2+)</name>
        <dbReference type="ChEBI" id="CHEBI:29105"/>
        <label>1</label>
    </ligand>
</feature>
<feature type="binding site" evidence="1">
    <location>
        <position position="88"/>
    </location>
    <ligand>
        <name>Zn(2+)</name>
        <dbReference type="ChEBI" id="CHEBI:29105"/>
        <label>1</label>
    </ligand>
</feature>
<feature type="binding site" evidence="1">
    <location>
        <position position="460"/>
    </location>
    <ligand>
        <name>Mg(2+)</name>
        <dbReference type="ChEBI" id="CHEBI:18420"/>
    </ligand>
</feature>
<feature type="binding site" evidence="1">
    <location>
        <position position="462"/>
    </location>
    <ligand>
        <name>Mg(2+)</name>
        <dbReference type="ChEBI" id="CHEBI:18420"/>
    </ligand>
</feature>
<feature type="binding site" evidence="1">
    <location>
        <position position="464"/>
    </location>
    <ligand>
        <name>Mg(2+)</name>
        <dbReference type="ChEBI" id="CHEBI:18420"/>
    </ligand>
</feature>
<feature type="binding site" evidence="1">
    <location>
        <position position="808"/>
    </location>
    <ligand>
        <name>Zn(2+)</name>
        <dbReference type="ChEBI" id="CHEBI:29105"/>
        <label>2</label>
    </ligand>
</feature>
<feature type="binding site" evidence="1">
    <location>
        <position position="882"/>
    </location>
    <ligand>
        <name>Zn(2+)</name>
        <dbReference type="ChEBI" id="CHEBI:29105"/>
        <label>2</label>
    </ligand>
</feature>
<feature type="binding site" evidence="1">
    <location>
        <position position="889"/>
    </location>
    <ligand>
        <name>Zn(2+)</name>
        <dbReference type="ChEBI" id="CHEBI:29105"/>
        <label>2</label>
    </ligand>
</feature>
<feature type="binding site" evidence="1">
    <location>
        <position position="892"/>
    </location>
    <ligand>
        <name>Zn(2+)</name>
        <dbReference type="ChEBI" id="CHEBI:29105"/>
        <label>2</label>
    </ligand>
</feature>
<gene>
    <name evidence="1" type="primary">rpoC</name>
    <name type="ordered locus">lpp0388</name>
</gene>
<sequence length="1401" mass="155642">MSDLLGILKQQGQSEEFDAIKIALASPELIRSWSYGEVKKPETINYRTFKPERDGLFCAKTFGPVKDYECLCGKYKRLKHRGVICEKCGVELALAKVRRERMGHIELASPVAHIWFLKSLPSRIGLLLDMTLRDIERVLYFEAFVVVDPGMTELERGQLLNDEAYLDAMEQYGDEFDARMGAEAIRDLLRQIDLEDEIRNLREELPTTNSETKIKKITKRLKLLEAFYESGNKPEWMIMDVLPVLPPDLRPLVPLDGGRFATSDLNDLYRRVINRNNRLKRLLDLNAPDIIVRNEKRMLQESVDALLDNGRRGRAITGTNKRPLKSLADMIKGKQGRFRQNLLGKRVDYSGRSVIVVGPTLKLHQCGLPKKMALELFKPFIFSKLEFRGLATTIKAAKKMVEREESVVWDILDDVIREHPILLNRAPTLHRLGIQAFEPVLIEGKAIQLHPLVCTAYNADFDGDQMAVHVPLTLEAQLEARSLMMSTNNILSPASGEPIIVPSQDVVLGLYYLTREKVNALGEGKIYSSAQEAQNFYEAGHLDIHAKIKIRMPKEDGETGYHLVETTVGRAILAEILPKGMPFDYINRTMTKKVISKVIDSCYRKFGLKETVIFADQLMYTGFKYATRSGASIGIEDMEIPDDKSSIIEHADNEVREIESQFRSGLVTNGERYNKVIDIWSRTNELVAKSMMSKIATEEVTDAKGNKVRQESFNPIFMMADSGARGSAAQIRQLAGMRGLMAAPDGSIIETPITANFREGLNVFQYFISTHGARKGLADTALKTANSGYLTRRLVDVAQDVVITEDDCGTDTGILMQPLIEGGDIVEPLHERVLGRVVASDVYIPTQTEPVVKAGTLLDEEWVEKLEKHGVDQVMVRSPITCQTRFGLCAKCYGRDLARGHLVNTGEAVGIIAAQSIGEPGTQLTMRTFHIGGAASRATAANNIQIKTKGVIRLHNIKTVTHENKNLVAVSRSGEVTIVDEFGRERERYKVPYGAVISAQDNSPVEAGQVIATWDPHTHPVISEVSGRLKFVDLIDGITMNRQTDELTGLSNIVIIDAKQRSAAGRDLRPMVKLVTDEGDDIYLAGTNVPAQYYLPVDAIVNFEDGSLVGIGDVIARIPQERSKTRDITGGLPRVADLFEARKPKDSAVMAEVSGLVNFGKETKGKRRLIINVSEDQCHEELIPKWRHISVFEGEHVERGEIIAEGALNPHDILRLLGVGALANYIVNEVQDVYRLQGVKINDKHIEVIVRQMLRKRVITFAGDSKFLVGEQVEESAMLQENDKLLAEGKQIARGTPILLGITKASLATESFISAASFQETTRVLTEAAVSGKVDELRGLKENVMVGRLIPAGTGYTYHQSRKAKRARAAAGGDSSATHTVTASDVEHALSEALNADNHEH</sequence>
<name>RPOC_LEGPA</name>
<dbReference type="EC" id="2.7.7.6" evidence="1"/>
<dbReference type="EMBL" id="CR628336">
    <property type="protein sequence ID" value="CAH11536.1"/>
    <property type="molecule type" value="Genomic_DNA"/>
</dbReference>
<dbReference type="RefSeq" id="WP_011213005.1">
    <property type="nucleotide sequence ID" value="NC_006368.1"/>
</dbReference>
<dbReference type="SMR" id="Q5X865"/>
<dbReference type="KEGG" id="lpp:lpp0388"/>
<dbReference type="LegioList" id="lpp0388"/>
<dbReference type="HOGENOM" id="CLU_000524_3_1_6"/>
<dbReference type="GO" id="GO:0000428">
    <property type="term" value="C:DNA-directed RNA polymerase complex"/>
    <property type="evidence" value="ECO:0007669"/>
    <property type="project" value="UniProtKB-KW"/>
</dbReference>
<dbReference type="GO" id="GO:0003677">
    <property type="term" value="F:DNA binding"/>
    <property type="evidence" value="ECO:0007669"/>
    <property type="project" value="UniProtKB-UniRule"/>
</dbReference>
<dbReference type="GO" id="GO:0003899">
    <property type="term" value="F:DNA-directed RNA polymerase activity"/>
    <property type="evidence" value="ECO:0007669"/>
    <property type="project" value="UniProtKB-UniRule"/>
</dbReference>
<dbReference type="GO" id="GO:0000287">
    <property type="term" value="F:magnesium ion binding"/>
    <property type="evidence" value="ECO:0007669"/>
    <property type="project" value="UniProtKB-UniRule"/>
</dbReference>
<dbReference type="GO" id="GO:0008270">
    <property type="term" value="F:zinc ion binding"/>
    <property type="evidence" value="ECO:0007669"/>
    <property type="project" value="UniProtKB-UniRule"/>
</dbReference>
<dbReference type="GO" id="GO:0006351">
    <property type="term" value="P:DNA-templated transcription"/>
    <property type="evidence" value="ECO:0007669"/>
    <property type="project" value="UniProtKB-UniRule"/>
</dbReference>
<dbReference type="CDD" id="cd02655">
    <property type="entry name" value="RNAP_beta'_C"/>
    <property type="match status" value="1"/>
</dbReference>
<dbReference type="CDD" id="cd01609">
    <property type="entry name" value="RNAP_beta'_N"/>
    <property type="match status" value="1"/>
</dbReference>
<dbReference type="FunFam" id="1.10.132.30:FF:000003">
    <property type="entry name" value="DNA-directed RNA polymerase subunit beta"/>
    <property type="match status" value="1"/>
</dbReference>
<dbReference type="FunFam" id="1.10.150.390:FF:000002">
    <property type="entry name" value="DNA-directed RNA polymerase subunit beta"/>
    <property type="match status" value="1"/>
</dbReference>
<dbReference type="FunFam" id="1.10.40.90:FF:000001">
    <property type="entry name" value="DNA-directed RNA polymerase subunit beta"/>
    <property type="match status" value="1"/>
</dbReference>
<dbReference type="Gene3D" id="1.10.132.30">
    <property type="match status" value="1"/>
</dbReference>
<dbReference type="Gene3D" id="1.10.150.390">
    <property type="match status" value="1"/>
</dbReference>
<dbReference type="Gene3D" id="1.10.1790.20">
    <property type="match status" value="1"/>
</dbReference>
<dbReference type="Gene3D" id="1.10.40.90">
    <property type="match status" value="1"/>
</dbReference>
<dbReference type="Gene3D" id="2.40.40.20">
    <property type="match status" value="1"/>
</dbReference>
<dbReference type="Gene3D" id="2.40.50.100">
    <property type="match status" value="3"/>
</dbReference>
<dbReference type="Gene3D" id="4.10.860.120">
    <property type="entry name" value="RNA polymerase II, clamp domain"/>
    <property type="match status" value="1"/>
</dbReference>
<dbReference type="Gene3D" id="1.10.274.100">
    <property type="entry name" value="RNA polymerase Rpb1, domain 3"/>
    <property type="match status" value="2"/>
</dbReference>
<dbReference type="HAMAP" id="MF_01322">
    <property type="entry name" value="RNApol_bact_RpoC"/>
    <property type="match status" value="1"/>
</dbReference>
<dbReference type="InterPro" id="IPR045867">
    <property type="entry name" value="DNA-dir_RpoC_beta_prime"/>
</dbReference>
<dbReference type="InterPro" id="IPR012754">
    <property type="entry name" value="DNA-dir_RpoC_beta_prime_bact"/>
</dbReference>
<dbReference type="InterPro" id="IPR000722">
    <property type="entry name" value="RNA_pol_asu"/>
</dbReference>
<dbReference type="InterPro" id="IPR006592">
    <property type="entry name" value="RNA_pol_N"/>
</dbReference>
<dbReference type="InterPro" id="IPR007080">
    <property type="entry name" value="RNA_pol_Rpb1_1"/>
</dbReference>
<dbReference type="InterPro" id="IPR007066">
    <property type="entry name" value="RNA_pol_Rpb1_3"/>
</dbReference>
<dbReference type="InterPro" id="IPR042102">
    <property type="entry name" value="RNA_pol_Rpb1_3_sf"/>
</dbReference>
<dbReference type="InterPro" id="IPR007083">
    <property type="entry name" value="RNA_pol_Rpb1_4"/>
</dbReference>
<dbReference type="InterPro" id="IPR007081">
    <property type="entry name" value="RNA_pol_Rpb1_5"/>
</dbReference>
<dbReference type="InterPro" id="IPR044893">
    <property type="entry name" value="RNA_pol_Rpb1_clamp_domain"/>
</dbReference>
<dbReference type="InterPro" id="IPR038120">
    <property type="entry name" value="Rpb1_funnel_sf"/>
</dbReference>
<dbReference type="NCBIfam" id="TIGR02386">
    <property type="entry name" value="rpoC_TIGR"/>
    <property type="match status" value="1"/>
</dbReference>
<dbReference type="PANTHER" id="PTHR19376">
    <property type="entry name" value="DNA-DIRECTED RNA POLYMERASE"/>
    <property type="match status" value="1"/>
</dbReference>
<dbReference type="PANTHER" id="PTHR19376:SF54">
    <property type="entry name" value="DNA-DIRECTED RNA POLYMERASE SUBUNIT BETA"/>
    <property type="match status" value="1"/>
</dbReference>
<dbReference type="Pfam" id="PF04997">
    <property type="entry name" value="RNA_pol_Rpb1_1"/>
    <property type="match status" value="1"/>
</dbReference>
<dbReference type="Pfam" id="PF00623">
    <property type="entry name" value="RNA_pol_Rpb1_2"/>
    <property type="match status" value="1"/>
</dbReference>
<dbReference type="Pfam" id="PF04983">
    <property type="entry name" value="RNA_pol_Rpb1_3"/>
    <property type="match status" value="1"/>
</dbReference>
<dbReference type="Pfam" id="PF05000">
    <property type="entry name" value="RNA_pol_Rpb1_4"/>
    <property type="match status" value="1"/>
</dbReference>
<dbReference type="Pfam" id="PF04998">
    <property type="entry name" value="RNA_pol_Rpb1_5"/>
    <property type="match status" value="1"/>
</dbReference>
<dbReference type="SMART" id="SM00663">
    <property type="entry name" value="RPOLA_N"/>
    <property type="match status" value="1"/>
</dbReference>
<dbReference type="SUPFAM" id="SSF64484">
    <property type="entry name" value="beta and beta-prime subunits of DNA dependent RNA-polymerase"/>
    <property type="match status" value="1"/>
</dbReference>
<proteinExistence type="inferred from homology"/>
<accession>Q5X865</accession>
<keyword id="KW-0240">DNA-directed RNA polymerase</keyword>
<keyword id="KW-0460">Magnesium</keyword>
<keyword id="KW-0479">Metal-binding</keyword>
<keyword id="KW-0548">Nucleotidyltransferase</keyword>
<keyword id="KW-0804">Transcription</keyword>
<keyword id="KW-0808">Transferase</keyword>
<keyword id="KW-0862">Zinc</keyword>